<protein>
    <recommendedName>
        <fullName evidence="1">GTPase Era</fullName>
    </recommendedName>
</protein>
<keyword id="KW-0997">Cell inner membrane</keyword>
<keyword id="KW-1003">Cell membrane</keyword>
<keyword id="KW-0963">Cytoplasm</keyword>
<keyword id="KW-0342">GTP-binding</keyword>
<keyword id="KW-0472">Membrane</keyword>
<keyword id="KW-0547">Nucleotide-binding</keyword>
<keyword id="KW-1185">Reference proteome</keyword>
<keyword id="KW-0690">Ribosome biogenesis</keyword>
<keyword id="KW-0694">RNA-binding</keyword>
<keyword id="KW-0699">rRNA-binding</keyword>
<accession>Q2NB82</accession>
<proteinExistence type="inferred from homology"/>
<name>ERA_ERYLH</name>
<sequence length="304" mass="33788">MTEKISKCGVVAVLGAPNAGKSTLVNQLVGQKVAITSAKAQTTRARMLGIALHESDDAKTQMILVDTPGIFAPRRRLDRAMVSAAWEGAESADAVLLLVDPVKQRRHELEPLLESLKDRPERKILVLNKVDVAKKEPLLALAQDLSQKVDFAEIYFVSALTGDGVPEMKNALAALMPEGVWHYPEDQVSDASERLLATEITREQLYQQLHEELPYDSAVRPEQYKQRPDGSLEIHQQIVIARESQRPIVLGKGGSRIKAIGEAARKDLSEILGVTVHLFLHVKVDEKWAENKEVFEEIGLDWVR</sequence>
<comment type="function">
    <text evidence="1">An essential GTPase that binds both GDP and GTP, with rapid nucleotide exchange. Plays a role in 16S rRNA processing and 30S ribosomal subunit biogenesis and possibly also in cell cycle regulation and energy metabolism.</text>
</comment>
<comment type="subunit">
    <text evidence="1">Monomer.</text>
</comment>
<comment type="subcellular location">
    <subcellularLocation>
        <location>Cytoplasm</location>
    </subcellularLocation>
    <subcellularLocation>
        <location evidence="1">Cell inner membrane</location>
        <topology evidence="1">Peripheral membrane protein</topology>
    </subcellularLocation>
</comment>
<comment type="similarity">
    <text evidence="1 2">Belongs to the TRAFAC class TrmE-Era-EngA-EngB-Septin-like GTPase superfamily. Era GTPase family.</text>
</comment>
<feature type="chain" id="PRO_1000079698" description="GTPase Era">
    <location>
        <begin position="1"/>
        <end position="304"/>
    </location>
</feature>
<feature type="domain" description="Era-type G" evidence="2">
    <location>
        <begin position="7"/>
        <end position="178"/>
    </location>
</feature>
<feature type="domain" description="KH type-2" evidence="1">
    <location>
        <begin position="209"/>
        <end position="286"/>
    </location>
</feature>
<feature type="region of interest" description="G1" evidence="2">
    <location>
        <begin position="15"/>
        <end position="22"/>
    </location>
</feature>
<feature type="region of interest" description="G2" evidence="2">
    <location>
        <begin position="41"/>
        <end position="45"/>
    </location>
</feature>
<feature type="region of interest" description="G3" evidence="2">
    <location>
        <begin position="66"/>
        <end position="69"/>
    </location>
</feature>
<feature type="region of interest" description="G4" evidence="2">
    <location>
        <begin position="128"/>
        <end position="131"/>
    </location>
</feature>
<feature type="region of interest" description="G5" evidence="2">
    <location>
        <begin position="157"/>
        <end position="159"/>
    </location>
</feature>
<feature type="binding site" evidence="1">
    <location>
        <begin position="15"/>
        <end position="22"/>
    </location>
    <ligand>
        <name>GTP</name>
        <dbReference type="ChEBI" id="CHEBI:37565"/>
    </ligand>
</feature>
<feature type="binding site" evidence="1">
    <location>
        <begin position="66"/>
        <end position="70"/>
    </location>
    <ligand>
        <name>GTP</name>
        <dbReference type="ChEBI" id="CHEBI:37565"/>
    </ligand>
</feature>
<feature type="binding site" evidence="1">
    <location>
        <begin position="128"/>
        <end position="131"/>
    </location>
    <ligand>
        <name>GTP</name>
        <dbReference type="ChEBI" id="CHEBI:37565"/>
    </ligand>
</feature>
<gene>
    <name evidence="1" type="primary">era</name>
    <name type="ordered locus">ELI_04835</name>
</gene>
<evidence type="ECO:0000255" key="1">
    <source>
        <dbReference type="HAMAP-Rule" id="MF_00367"/>
    </source>
</evidence>
<evidence type="ECO:0000255" key="2">
    <source>
        <dbReference type="PROSITE-ProRule" id="PRU01050"/>
    </source>
</evidence>
<organism>
    <name type="scientific">Erythrobacter litoralis (strain HTCC2594)</name>
    <dbReference type="NCBI Taxonomy" id="314225"/>
    <lineage>
        <taxon>Bacteria</taxon>
        <taxon>Pseudomonadati</taxon>
        <taxon>Pseudomonadota</taxon>
        <taxon>Alphaproteobacteria</taxon>
        <taxon>Sphingomonadales</taxon>
        <taxon>Erythrobacteraceae</taxon>
        <taxon>Erythrobacter/Porphyrobacter group</taxon>
        <taxon>Erythrobacter</taxon>
    </lineage>
</organism>
<reference key="1">
    <citation type="journal article" date="2009" name="J. Bacteriol.">
        <title>Complete genome sequence of Erythrobacter litoralis HTCC2594.</title>
        <authorList>
            <person name="Oh H.M."/>
            <person name="Giovannoni S.J."/>
            <person name="Ferriera S."/>
            <person name="Johnson J."/>
            <person name="Cho J.C."/>
        </authorList>
    </citation>
    <scope>NUCLEOTIDE SEQUENCE [LARGE SCALE GENOMIC DNA]</scope>
    <source>
        <strain>HTCC2594</strain>
    </source>
</reference>
<dbReference type="EMBL" id="CP000157">
    <property type="protein sequence ID" value="ABC63059.1"/>
    <property type="molecule type" value="Genomic_DNA"/>
</dbReference>
<dbReference type="RefSeq" id="WP_011413895.1">
    <property type="nucleotide sequence ID" value="NC_007722.1"/>
</dbReference>
<dbReference type="SMR" id="Q2NB82"/>
<dbReference type="STRING" id="314225.ELI_04835"/>
<dbReference type="KEGG" id="eli:ELI_04835"/>
<dbReference type="eggNOG" id="COG1159">
    <property type="taxonomic scope" value="Bacteria"/>
</dbReference>
<dbReference type="HOGENOM" id="CLU_038009_1_1_5"/>
<dbReference type="OrthoDB" id="9805918at2"/>
<dbReference type="Proteomes" id="UP000008808">
    <property type="component" value="Chromosome"/>
</dbReference>
<dbReference type="GO" id="GO:0005829">
    <property type="term" value="C:cytosol"/>
    <property type="evidence" value="ECO:0007669"/>
    <property type="project" value="TreeGrafter"/>
</dbReference>
<dbReference type="GO" id="GO:0005886">
    <property type="term" value="C:plasma membrane"/>
    <property type="evidence" value="ECO:0007669"/>
    <property type="project" value="UniProtKB-SubCell"/>
</dbReference>
<dbReference type="GO" id="GO:0005525">
    <property type="term" value="F:GTP binding"/>
    <property type="evidence" value="ECO:0007669"/>
    <property type="project" value="UniProtKB-UniRule"/>
</dbReference>
<dbReference type="GO" id="GO:0003924">
    <property type="term" value="F:GTPase activity"/>
    <property type="evidence" value="ECO:0007669"/>
    <property type="project" value="UniProtKB-UniRule"/>
</dbReference>
<dbReference type="GO" id="GO:0043024">
    <property type="term" value="F:ribosomal small subunit binding"/>
    <property type="evidence" value="ECO:0007669"/>
    <property type="project" value="TreeGrafter"/>
</dbReference>
<dbReference type="GO" id="GO:0070181">
    <property type="term" value="F:small ribosomal subunit rRNA binding"/>
    <property type="evidence" value="ECO:0007669"/>
    <property type="project" value="UniProtKB-UniRule"/>
</dbReference>
<dbReference type="GO" id="GO:0000028">
    <property type="term" value="P:ribosomal small subunit assembly"/>
    <property type="evidence" value="ECO:0007669"/>
    <property type="project" value="TreeGrafter"/>
</dbReference>
<dbReference type="CDD" id="cd04163">
    <property type="entry name" value="Era"/>
    <property type="match status" value="1"/>
</dbReference>
<dbReference type="CDD" id="cd22534">
    <property type="entry name" value="KH-II_Era"/>
    <property type="match status" value="1"/>
</dbReference>
<dbReference type="Gene3D" id="3.30.300.20">
    <property type="match status" value="1"/>
</dbReference>
<dbReference type="Gene3D" id="3.40.50.300">
    <property type="entry name" value="P-loop containing nucleotide triphosphate hydrolases"/>
    <property type="match status" value="1"/>
</dbReference>
<dbReference type="HAMAP" id="MF_00367">
    <property type="entry name" value="GTPase_Era"/>
    <property type="match status" value="1"/>
</dbReference>
<dbReference type="InterPro" id="IPR030388">
    <property type="entry name" value="G_ERA_dom"/>
</dbReference>
<dbReference type="InterPro" id="IPR006073">
    <property type="entry name" value="GTP-bd"/>
</dbReference>
<dbReference type="InterPro" id="IPR005662">
    <property type="entry name" value="GTPase_Era-like"/>
</dbReference>
<dbReference type="InterPro" id="IPR015946">
    <property type="entry name" value="KH_dom-like_a/b"/>
</dbReference>
<dbReference type="InterPro" id="IPR004044">
    <property type="entry name" value="KH_dom_type_2"/>
</dbReference>
<dbReference type="InterPro" id="IPR009019">
    <property type="entry name" value="KH_sf_prok-type"/>
</dbReference>
<dbReference type="InterPro" id="IPR027417">
    <property type="entry name" value="P-loop_NTPase"/>
</dbReference>
<dbReference type="InterPro" id="IPR005225">
    <property type="entry name" value="Small_GTP-bd"/>
</dbReference>
<dbReference type="NCBIfam" id="TIGR00436">
    <property type="entry name" value="era"/>
    <property type="match status" value="1"/>
</dbReference>
<dbReference type="NCBIfam" id="NF000908">
    <property type="entry name" value="PRK00089.1"/>
    <property type="match status" value="1"/>
</dbReference>
<dbReference type="NCBIfam" id="TIGR00231">
    <property type="entry name" value="small_GTP"/>
    <property type="match status" value="1"/>
</dbReference>
<dbReference type="PANTHER" id="PTHR42698">
    <property type="entry name" value="GTPASE ERA"/>
    <property type="match status" value="1"/>
</dbReference>
<dbReference type="PANTHER" id="PTHR42698:SF1">
    <property type="entry name" value="GTPASE ERA, MITOCHONDRIAL"/>
    <property type="match status" value="1"/>
</dbReference>
<dbReference type="Pfam" id="PF07650">
    <property type="entry name" value="KH_2"/>
    <property type="match status" value="1"/>
</dbReference>
<dbReference type="Pfam" id="PF01926">
    <property type="entry name" value="MMR_HSR1"/>
    <property type="match status" value="1"/>
</dbReference>
<dbReference type="SUPFAM" id="SSF52540">
    <property type="entry name" value="P-loop containing nucleoside triphosphate hydrolases"/>
    <property type="match status" value="1"/>
</dbReference>
<dbReference type="SUPFAM" id="SSF54814">
    <property type="entry name" value="Prokaryotic type KH domain (KH-domain type II)"/>
    <property type="match status" value="1"/>
</dbReference>
<dbReference type="PROSITE" id="PS51713">
    <property type="entry name" value="G_ERA"/>
    <property type="match status" value="1"/>
</dbReference>
<dbReference type="PROSITE" id="PS50823">
    <property type="entry name" value="KH_TYPE_2"/>
    <property type="match status" value="1"/>
</dbReference>